<reference key="1">
    <citation type="journal article" date="2005" name="Nature">
        <title>Genomic sequence of the pathogenic and allergenic filamentous fungus Aspergillus fumigatus.</title>
        <authorList>
            <person name="Nierman W.C."/>
            <person name="Pain A."/>
            <person name="Anderson M.J."/>
            <person name="Wortman J.R."/>
            <person name="Kim H.S."/>
            <person name="Arroyo J."/>
            <person name="Berriman M."/>
            <person name="Abe K."/>
            <person name="Archer D.B."/>
            <person name="Bermejo C."/>
            <person name="Bennett J.W."/>
            <person name="Bowyer P."/>
            <person name="Chen D."/>
            <person name="Collins M."/>
            <person name="Coulsen R."/>
            <person name="Davies R."/>
            <person name="Dyer P.S."/>
            <person name="Farman M.L."/>
            <person name="Fedorova N."/>
            <person name="Fedorova N.D."/>
            <person name="Feldblyum T.V."/>
            <person name="Fischer R."/>
            <person name="Fosker N."/>
            <person name="Fraser A."/>
            <person name="Garcia J.L."/>
            <person name="Garcia M.J."/>
            <person name="Goble A."/>
            <person name="Goldman G.H."/>
            <person name="Gomi K."/>
            <person name="Griffith-Jones S."/>
            <person name="Gwilliam R."/>
            <person name="Haas B.J."/>
            <person name="Haas H."/>
            <person name="Harris D.E."/>
            <person name="Horiuchi H."/>
            <person name="Huang J."/>
            <person name="Humphray S."/>
            <person name="Jimenez J."/>
            <person name="Keller N."/>
            <person name="Khouri H."/>
            <person name="Kitamoto K."/>
            <person name="Kobayashi T."/>
            <person name="Konzack S."/>
            <person name="Kulkarni R."/>
            <person name="Kumagai T."/>
            <person name="Lafton A."/>
            <person name="Latge J.-P."/>
            <person name="Li W."/>
            <person name="Lord A."/>
            <person name="Lu C."/>
            <person name="Majoros W.H."/>
            <person name="May G.S."/>
            <person name="Miller B.L."/>
            <person name="Mohamoud Y."/>
            <person name="Molina M."/>
            <person name="Monod M."/>
            <person name="Mouyna I."/>
            <person name="Mulligan S."/>
            <person name="Murphy L.D."/>
            <person name="O'Neil S."/>
            <person name="Paulsen I."/>
            <person name="Penalva M.A."/>
            <person name="Pertea M."/>
            <person name="Price C."/>
            <person name="Pritchard B.L."/>
            <person name="Quail M.A."/>
            <person name="Rabbinowitsch E."/>
            <person name="Rawlins N."/>
            <person name="Rajandream M.A."/>
            <person name="Reichard U."/>
            <person name="Renauld H."/>
            <person name="Robson G.D."/>
            <person name="Rodriguez de Cordoba S."/>
            <person name="Rodriguez-Pena J.M."/>
            <person name="Ronning C.M."/>
            <person name="Rutter S."/>
            <person name="Salzberg S.L."/>
            <person name="Sanchez M."/>
            <person name="Sanchez-Ferrero J.C."/>
            <person name="Saunders D."/>
            <person name="Seeger K."/>
            <person name="Squares R."/>
            <person name="Squares S."/>
            <person name="Takeuchi M."/>
            <person name="Tekaia F."/>
            <person name="Turner G."/>
            <person name="Vazquez de Aldana C.R."/>
            <person name="Weidman J."/>
            <person name="White O."/>
            <person name="Woodward J.R."/>
            <person name="Yu J.-H."/>
            <person name="Fraser C.M."/>
            <person name="Galagan J.E."/>
            <person name="Asai K."/>
            <person name="Machida M."/>
            <person name="Hall N."/>
            <person name="Barrell B.G."/>
            <person name="Denning D.W."/>
        </authorList>
    </citation>
    <scope>NUCLEOTIDE SEQUENCE [LARGE SCALE GENOMIC DNA]</scope>
    <source>
        <strain>ATCC MYA-4609 / CBS 101355 / FGSC A1100 / Af293</strain>
    </source>
</reference>
<reference key="2">
    <citation type="journal article" date="2009" name="Appl. Microbiol. Biotechnol.">
        <title>Heterologous expression and characterization of a beta-1,6-glucanase from Aspergillus fumigatus.</title>
        <authorList>
            <person name="Boisrame A."/>
            <person name="Gaillardin C."/>
        </authorList>
    </citation>
    <scope>FUNCTION</scope>
    <scope>CATALYTIC ACTIVITY</scope>
    <scope>BIOPHYSICOCHEMICAL PROPERTIES</scope>
</reference>
<comment type="function">
    <text evidence="4">Endoglucanase that has highest activity on the linear beta-1,6-glucan pustulan and lower activity against laminarin (beta-1,3-glucans with beta-1,6-branches). Is active on C.albicans cell walls allowing the release of a previously described cell wall proteins.</text>
</comment>
<comment type="catalytic activity">
    <reaction evidence="4">
        <text>Random hydrolysis of (1-&gt;6)-linkages in (1-&gt;6)-beta-D-glucans.</text>
        <dbReference type="EC" id="3.2.1.75"/>
    </reaction>
</comment>
<comment type="biophysicochemical properties">
    <phDependence>
        <text evidence="4">Optimum pH is 4.5.</text>
    </phDependence>
</comment>
<comment type="subcellular location">
    <subcellularLocation>
        <location evidence="6">Secreted</location>
    </subcellularLocation>
</comment>
<comment type="similarity">
    <text evidence="6">Belongs to the glycosyl hydrolase 30 family.</text>
</comment>
<sequence>MRISVGALLGLTALSHATTEKRAASASAYCSNSAGNYKLSSIAAPVQGAGNPGSESTWQLTVDDTSSGHKQTIVGFGAAVTDATVTSFNTLSASVLQDLLNKLMTPAGANFALMRHTIGASDLSGDPAYTYDDNGGKADPSLSGFNLGDRGTAMAKMLATMKSLQPNLKILGSPWSAPGWMKLNGVLDGNTNNNNLNDGYLTSGGTGSTGYASQFAQYFVKYIQAYKNLGAHVDAITIQNEPLFSSAGYPTMYVYDYESAQLIQNYIGPALASAGLDTEIWAYDHNTDVPSYPQTVLNQAGQYVKSVAWHCYAPNVDWTVLSQFHNTNPGVKQYMTECWTPASGAWHQAADFTMGPLQNWASGVAAWTLGTNAQDGPHLSTGGCATCQGLVTINNGGYTLNTAYYMMAQFSKFMPPGAIVLNGSGSYTYSGGGGIQSVASLNPDGTRTVVIENTFGNDVYVTVTMKSGQKWSGNAPSQSVTTWVLPSA</sequence>
<gene>
    <name evidence="5" type="primary">neg1</name>
    <name type="ORF">AFUA_8G07120</name>
</gene>
<evidence type="ECO:0000250" key="1">
    <source>
        <dbReference type="UniProtKB" id="P04062"/>
    </source>
</evidence>
<evidence type="ECO:0000255" key="2"/>
<evidence type="ECO:0000255" key="3">
    <source>
        <dbReference type="PROSITE-ProRule" id="PRU00498"/>
    </source>
</evidence>
<evidence type="ECO:0000269" key="4">
    <source>
    </source>
</evidence>
<evidence type="ECO:0000303" key="5">
    <source>
    </source>
</evidence>
<evidence type="ECO:0000305" key="6"/>
<protein>
    <recommendedName>
        <fullName>Endo-1,6-beta-D-glucanase neg1</fullName>
        <ecNumber evidence="4">3.2.1.75</ecNumber>
    </recommendedName>
    <alternativeName>
        <fullName>Beta-1,6-glucanase neg1</fullName>
    </alternativeName>
    <alternativeName>
        <fullName>Glucan endo-1,6-beta-glucosidase neg1</fullName>
    </alternativeName>
</protein>
<accession>Q4WBR2</accession>
<organism>
    <name type="scientific">Aspergillus fumigatus (strain ATCC MYA-4609 / CBS 101355 / FGSC A1100 / Af293)</name>
    <name type="common">Neosartorya fumigata</name>
    <dbReference type="NCBI Taxonomy" id="330879"/>
    <lineage>
        <taxon>Eukaryota</taxon>
        <taxon>Fungi</taxon>
        <taxon>Dikarya</taxon>
        <taxon>Ascomycota</taxon>
        <taxon>Pezizomycotina</taxon>
        <taxon>Eurotiomycetes</taxon>
        <taxon>Eurotiomycetidae</taxon>
        <taxon>Eurotiales</taxon>
        <taxon>Aspergillaceae</taxon>
        <taxon>Aspergillus</taxon>
        <taxon>Aspergillus subgen. Fumigati</taxon>
    </lineage>
</organism>
<keyword id="KW-0325">Glycoprotein</keyword>
<keyword id="KW-0326">Glycosidase</keyword>
<keyword id="KW-0378">Hydrolase</keyword>
<keyword id="KW-1185">Reference proteome</keyword>
<keyword id="KW-0964">Secreted</keyword>
<keyword id="KW-0732">Signal</keyword>
<feature type="signal peptide" evidence="2">
    <location>
        <begin position="1"/>
        <end position="17"/>
    </location>
</feature>
<feature type="chain" id="PRO_0000432744" description="Endo-1,6-beta-D-glucanase neg1" evidence="2">
    <location>
        <begin position="18"/>
        <end position="488"/>
    </location>
</feature>
<feature type="active site" description="Proton donor" evidence="1">
    <location>
        <position position="241"/>
    </location>
</feature>
<feature type="active site" description="Nucleophile" evidence="1">
    <location>
        <position position="337"/>
    </location>
</feature>
<feature type="glycosylation site" description="N-linked (GlcNAc...) asparagine" evidence="3">
    <location>
        <position position="422"/>
    </location>
</feature>
<dbReference type="EC" id="3.2.1.75" evidence="4"/>
<dbReference type="EMBL" id="AAHF01000013">
    <property type="protein sequence ID" value="EAL85472.1"/>
    <property type="molecule type" value="Genomic_DNA"/>
</dbReference>
<dbReference type="RefSeq" id="XP_747510.1">
    <property type="nucleotide sequence ID" value="XM_742417.1"/>
</dbReference>
<dbReference type="SMR" id="Q4WBR2"/>
<dbReference type="STRING" id="330879.Q4WBR2"/>
<dbReference type="GlyCosmos" id="Q4WBR2">
    <property type="glycosylation" value="1 site, No reported glycans"/>
</dbReference>
<dbReference type="EnsemblFungi" id="EAL85472">
    <property type="protein sequence ID" value="EAL85472"/>
    <property type="gene ID" value="AFUA_8G07120"/>
</dbReference>
<dbReference type="GeneID" id="3504964"/>
<dbReference type="KEGG" id="afm:AFUA_8G07120"/>
<dbReference type="VEuPathDB" id="FungiDB:Afu8g07120"/>
<dbReference type="eggNOG" id="KOG2566">
    <property type="taxonomic scope" value="Eukaryota"/>
</dbReference>
<dbReference type="HOGENOM" id="CLU_014379_3_1_1"/>
<dbReference type="InParanoid" id="Q4WBR2"/>
<dbReference type="OMA" id="FGGIAWH"/>
<dbReference type="OrthoDB" id="2160638at2759"/>
<dbReference type="Proteomes" id="UP000002530">
    <property type="component" value="Chromosome 8"/>
</dbReference>
<dbReference type="GO" id="GO:0005576">
    <property type="term" value="C:extracellular region"/>
    <property type="evidence" value="ECO:0007669"/>
    <property type="project" value="UniProtKB-SubCell"/>
</dbReference>
<dbReference type="GO" id="GO:0016020">
    <property type="term" value="C:membrane"/>
    <property type="evidence" value="ECO:0007669"/>
    <property type="project" value="GOC"/>
</dbReference>
<dbReference type="GO" id="GO:0046557">
    <property type="term" value="F:glucan endo-1,6-beta-glucosidase activity"/>
    <property type="evidence" value="ECO:0000314"/>
    <property type="project" value="AspGD"/>
</dbReference>
<dbReference type="GO" id="GO:0004348">
    <property type="term" value="F:glucosylceramidase activity"/>
    <property type="evidence" value="ECO:0000318"/>
    <property type="project" value="GO_Central"/>
</dbReference>
<dbReference type="GO" id="GO:0006680">
    <property type="term" value="P:glucosylceramide catabolic process"/>
    <property type="evidence" value="ECO:0000318"/>
    <property type="project" value="GO_Central"/>
</dbReference>
<dbReference type="FunFam" id="3.20.20.80:FF:000128">
    <property type="entry name" value="Endo-1,6-beta-D-glucanase neg1"/>
    <property type="match status" value="1"/>
</dbReference>
<dbReference type="Gene3D" id="3.20.20.80">
    <property type="entry name" value="Glycosidases"/>
    <property type="match status" value="1"/>
</dbReference>
<dbReference type="Gene3D" id="2.60.40.1180">
    <property type="entry name" value="Golgi alpha-mannosidase II"/>
    <property type="match status" value="1"/>
</dbReference>
<dbReference type="InterPro" id="IPR033452">
    <property type="entry name" value="GH30_C"/>
</dbReference>
<dbReference type="InterPro" id="IPR001139">
    <property type="entry name" value="Glyco_hydro_30"/>
</dbReference>
<dbReference type="InterPro" id="IPR033453">
    <property type="entry name" value="Glyco_hydro_30_TIM-barrel"/>
</dbReference>
<dbReference type="InterPro" id="IPR013780">
    <property type="entry name" value="Glyco_hydro_b"/>
</dbReference>
<dbReference type="InterPro" id="IPR017853">
    <property type="entry name" value="Glycoside_hydrolase_SF"/>
</dbReference>
<dbReference type="PANTHER" id="PTHR11069">
    <property type="entry name" value="GLUCOSYLCERAMIDASE"/>
    <property type="match status" value="1"/>
</dbReference>
<dbReference type="PANTHER" id="PTHR11069:SF23">
    <property type="entry name" value="LYSOSOMAL ACID GLUCOSYLCERAMIDASE"/>
    <property type="match status" value="1"/>
</dbReference>
<dbReference type="Pfam" id="PF02055">
    <property type="entry name" value="Glyco_hydro_30"/>
    <property type="match status" value="1"/>
</dbReference>
<dbReference type="Pfam" id="PF17189">
    <property type="entry name" value="Glyco_hydro_30C"/>
    <property type="match status" value="1"/>
</dbReference>
<dbReference type="SUPFAM" id="SSF51445">
    <property type="entry name" value="(Trans)glycosidases"/>
    <property type="match status" value="1"/>
</dbReference>
<name>NEG1_ASPFU</name>
<proteinExistence type="evidence at protein level"/>